<gene>
    <name type="primary">ACTN2</name>
</gene>
<protein>
    <recommendedName>
        <fullName>Alpha-actinin-2</fullName>
    </recommendedName>
    <alternativeName>
        <fullName>Alpha-actinin skeletal muscle isoform 2</fullName>
    </alternativeName>
    <alternativeName>
        <fullName>F-actin cross-linking protein</fullName>
    </alternativeName>
</protein>
<reference key="1">
    <citation type="submission" date="2005-08" db="EMBL/GenBank/DDBJ databases">
        <authorList>
            <consortium name="NIH - Mammalian Gene Collection (MGC) project"/>
        </authorList>
    </citation>
    <scope>NUCLEOTIDE SEQUENCE [LARGE SCALE MRNA]</scope>
    <source>
        <strain>Hereford</strain>
        <tissue>Heart ventricle</tissue>
    </source>
</reference>
<accession>Q3ZC55</accession>
<feature type="chain" id="PRO_0000268163" description="Alpha-actinin-2">
    <location>
        <begin position="1"/>
        <end position="894"/>
    </location>
</feature>
<feature type="domain" description="Calponin-homology (CH) 1" evidence="4">
    <location>
        <begin position="38"/>
        <end position="142"/>
    </location>
</feature>
<feature type="domain" description="Calponin-homology (CH) 2" evidence="4">
    <location>
        <begin position="151"/>
        <end position="257"/>
    </location>
</feature>
<feature type="repeat" description="Spectrin 1">
    <location>
        <begin position="281"/>
        <end position="391"/>
    </location>
</feature>
<feature type="repeat" description="Spectrin 2">
    <location>
        <begin position="401"/>
        <end position="506"/>
    </location>
</feature>
<feature type="repeat" description="Spectrin 3">
    <location>
        <begin position="516"/>
        <end position="627"/>
    </location>
</feature>
<feature type="repeat" description="Spectrin 4">
    <location>
        <begin position="637"/>
        <end position="740"/>
    </location>
</feature>
<feature type="domain" description="EF-hand 1" evidence="5">
    <location>
        <begin position="753"/>
        <end position="788"/>
    </location>
</feature>
<feature type="domain" description="EF-hand 2" evidence="5">
    <location>
        <begin position="789"/>
        <end position="824"/>
    </location>
</feature>
<feature type="region of interest" description="Actin-binding">
    <location>
        <begin position="1"/>
        <end position="254"/>
    </location>
</feature>
<feature type="binding site" evidence="6">
    <location>
        <position position="766"/>
    </location>
    <ligand>
        <name>Ca(2+)</name>
        <dbReference type="ChEBI" id="CHEBI:29108"/>
        <label>1</label>
    </ligand>
</feature>
<feature type="binding site" evidence="6">
    <location>
        <position position="770"/>
    </location>
    <ligand>
        <name>Ca(2+)</name>
        <dbReference type="ChEBI" id="CHEBI:29108"/>
        <label>1</label>
    </ligand>
</feature>
<feature type="binding site" evidence="6">
    <location>
        <position position="777"/>
    </location>
    <ligand>
        <name>Ca(2+)</name>
        <dbReference type="ChEBI" id="CHEBI:29108"/>
        <label>1</label>
    </ligand>
</feature>
<feature type="binding site" evidence="6">
    <location>
        <position position="802"/>
    </location>
    <ligand>
        <name>Ca(2+)</name>
        <dbReference type="ChEBI" id="CHEBI:29108"/>
        <label>2</label>
    </ligand>
</feature>
<feature type="binding site" evidence="6">
    <location>
        <position position="804"/>
    </location>
    <ligand>
        <name>Ca(2+)</name>
        <dbReference type="ChEBI" id="CHEBI:29108"/>
        <label>2</label>
    </ligand>
</feature>
<feature type="binding site" evidence="6">
    <location>
        <position position="808"/>
    </location>
    <ligand>
        <name>Ca(2+)</name>
        <dbReference type="ChEBI" id="CHEBI:29108"/>
        <label>2</label>
    </ligand>
</feature>
<feature type="modified residue" description="Phosphothreonine" evidence="3">
    <location>
        <position position="237"/>
    </location>
</feature>
<dbReference type="EMBL" id="BC102908">
    <property type="protein sequence ID" value="AAI02909.1"/>
    <property type="molecule type" value="mRNA"/>
</dbReference>
<dbReference type="RefSeq" id="NP_001029807.1">
    <property type="nucleotide sequence ID" value="NM_001034635.1"/>
</dbReference>
<dbReference type="BMRB" id="Q3ZC55"/>
<dbReference type="SMR" id="Q3ZC55"/>
<dbReference type="FunCoup" id="Q3ZC55">
    <property type="interactions" value="369"/>
</dbReference>
<dbReference type="STRING" id="9913.ENSBTAP00000065163"/>
<dbReference type="PaxDb" id="9913-ENSBTAP00000012786"/>
<dbReference type="PeptideAtlas" id="Q3ZC55"/>
<dbReference type="Ensembl" id="ENSBTAT00000012786.5">
    <property type="protein sequence ID" value="ENSBTAP00000012786.5"/>
    <property type="gene ID" value="ENSBTAG00000009696.6"/>
</dbReference>
<dbReference type="GeneID" id="536607"/>
<dbReference type="KEGG" id="bta:536607"/>
<dbReference type="CTD" id="88"/>
<dbReference type="VEuPathDB" id="HostDB:ENSBTAG00000009696"/>
<dbReference type="VGNC" id="VGNC:25582">
    <property type="gene designation" value="ACTN2"/>
</dbReference>
<dbReference type="eggNOG" id="KOG0035">
    <property type="taxonomic scope" value="Eukaryota"/>
</dbReference>
<dbReference type="GeneTree" id="ENSGT00940000153968"/>
<dbReference type="InParanoid" id="Q3ZC55"/>
<dbReference type="OMA" id="IMILVDP"/>
<dbReference type="OrthoDB" id="10017054at2759"/>
<dbReference type="Reactome" id="R-BTA-114608">
    <property type="pathway name" value="Platelet degranulation"/>
</dbReference>
<dbReference type="Reactome" id="R-BTA-390522">
    <property type="pathway name" value="Striated Muscle Contraction"/>
</dbReference>
<dbReference type="Reactome" id="R-BTA-438066">
    <property type="pathway name" value="Unblocking of NMDA receptors, glutamate binding and activation"/>
</dbReference>
<dbReference type="Reactome" id="R-BTA-5673001">
    <property type="pathway name" value="RAF/MAP kinase cascade"/>
</dbReference>
<dbReference type="Proteomes" id="UP000009136">
    <property type="component" value="Chromosome 28"/>
</dbReference>
<dbReference type="Bgee" id="ENSBTAG00000009696">
    <property type="expression patterns" value="Expressed in gluteus medius and 95 other cell types or tissues"/>
</dbReference>
<dbReference type="GO" id="GO:0030054">
    <property type="term" value="C:cell junction"/>
    <property type="evidence" value="ECO:0000318"/>
    <property type="project" value="GO_Central"/>
</dbReference>
<dbReference type="GO" id="GO:0042995">
    <property type="term" value="C:cell projection"/>
    <property type="evidence" value="ECO:0000318"/>
    <property type="project" value="GO_Central"/>
</dbReference>
<dbReference type="GO" id="GO:0030864">
    <property type="term" value="C:cortical actin cytoskeleton"/>
    <property type="evidence" value="ECO:0000318"/>
    <property type="project" value="GO_Central"/>
</dbReference>
<dbReference type="GO" id="GO:0030175">
    <property type="term" value="C:filopodium"/>
    <property type="evidence" value="ECO:0007669"/>
    <property type="project" value="Ensembl"/>
</dbReference>
<dbReference type="GO" id="GO:0005925">
    <property type="term" value="C:focal adhesion"/>
    <property type="evidence" value="ECO:0007669"/>
    <property type="project" value="Ensembl"/>
</dbReference>
<dbReference type="GO" id="GO:0005886">
    <property type="term" value="C:plasma membrane"/>
    <property type="evidence" value="ECO:0000318"/>
    <property type="project" value="GO_Central"/>
</dbReference>
<dbReference type="GO" id="GO:0030018">
    <property type="term" value="C:Z disc"/>
    <property type="evidence" value="ECO:0000318"/>
    <property type="project" value="GO_Central"/>
</dbReference>
<dbReference type="GO" id="GO:0051015">
    <property type="term" value="F:actin filament binding"/>
    <property type="evidence" value="ECO:0000318"/>
    <property type="project" value="GO_Central"/>
</dbReference>
<dbReference type="GO" id="GO:0005509">
    <property type="term" value="F:calcium ion binding"/>
    <property type="evidence" value="ECO:0007669"/>
    <property type="project" value="InterPro"/>
</dbReference>
<dbReference type="GO" id="GO:0099103">
    <property type="term" value="F:channel activator activity"/>
    <property type="evidence" value="ECO:0007669"/>
    <property type="project" value="Ensembl"/>
</dbReference>
<dbReference type="GO" id="GO:0051373">
    <property type="term" value="F:FATZ binding"/>
    <property type="evidence" value="ECO:0007669"/>
    <property type="project" value="Ensembl"/>
</dbReference>
<dbReference type="GO" id="GO:0042802">
    <property type="term" value="F:identical protein binding"/>
    <property type="evidence" value="ECO:0007669"/>
    <property type="project" value="Ensembl"/>
</dbReference>
<dbReference type="GO" id="GO:0030274">
    <property type="term" value="F:LIM domain binding"/>
    <property type="evidence" value="ECO:0007669"/>
    <property type="project" value="Ensembl"/>
</dbReference>
<dbReference type="GO" id="GO:0005546">
    <property type="term" value="F:phosphatidylinositol-4,5-bisphosphate binding"/>
    <property type="evidence" value="ECO:0007669"/>
    <property type="project" value="Ensembl"/>
</dbReference>
<dbReference type="GO" id="GO:0031432">
    <property type="term" value="F:titin binding"/>
    <property type="evidence" value="ECO:0007669"/>
    <property type="project" value="Ensembl"/>
</dbReference>
<dbReference type="GO" id="GO:0070080">
    <property type="term" value="F:titin Z domain binding"/>
    <property type="evidence" value="ECO:0007669"/>
    <property type="project" value="Ensembl"/>
</dbReference>
<dbReference type="GO" id="GO:0003713">
    <property type="term" value="F:transcription coactivator activity"/>
    <property type="evidence" value="ECO:0007669"/>
    <property type="project" value="Ensembl"/>
</dbReference>
<dbReference type="GO" id="GO:0044325">
    <property type="term" value="F:transmembrane transporter binding"/>
    <property type="evidence" value="ECO:0007669"/>
    <property type="project" value="Ensembl"/>
</dbReference>
<dbReference type="GO" id="GO:0030036">
    <property type="term" value="P:actin cytoskeleton organization"/>
    <property type="evidence" value="ECO:0000318"/>
    <property type="project" value="GO_Central"/>
</dbReference>
<dbReference type="GO" id="GO:0051695">
    <property type="term" value="P:actin filament uncapping"/>
    <property type="evidence" value="ECO:0007669"/>
    <property type="project" value="Ensembl"/>
</dbReference>
<dbReference type="GO" id="GO:0055013">
    <property type="term" value="P:cardiac muscle cell development"/>
    <property type="evidence" value="ECO:0007669"/>
    <property type="project" value="Ensembl"/>
</dbReference>
<dbReference type="GO" id="GO:0048041">
    <property type="term" value="P:focal adhesion assembly"/>
    <property type="evidence" value="ECO:0007669"/>
    <property type="project" value="Ensembl"/>
</dbReference>
<dbReference type="GO" id="GO:0030035">
    <property type="term" value="P:microspike assembly"/>
    <property type="evidence" value="ECO:0007669"/>
    <property type="project" value="Ensembl"/>
</dbReference>
<dbReference type="GO" id="GO:0055001">
    <property type="term" value="P:muscle cell development"/>
    <property type="evidence" value="ECO:0000318"/>
    <property type="project" value="GO_Central"/>
</dbReference>
<dbReference type="GO" id="GO:0043267">
    <property type="term" value="P:negative regulation of potassium ion transport"/>
    <property type="evidence" value="ECO:0007669"/>
    <property type="project" value="Ensembl"/>
</dbReference>
<dbReference type="GO" id="GO:2000009">
    <property type="term" value="P:negative regulation of protein localization to cell surface"/>
    <property type="evidence" value="ECO:0007669"/>
    <property type="project" value="Ensembl"/>
</dbReference>
<dbReference type="GO" id="GO:0086097">
    <property type="term" value="P:phospholipase C-activating angiotensin-activated signaling pathway"/>
    <property type="evidence" value="ECO:0007669"/>
    <property type="project" value="Ensembl"/>
</dbReference>
<dbReference type="GO" id="GO:2001137">
    <property type="term" value="P:positive regulation of endocytic recycling"/>
    <property type="evidence" value="ECO:0007669"/>
    <property type="project" value="Ensembl"/>
</dbReference>
<dbReference type="GO" id="GO:0043268">
    <property type="term" value="P:positive regulation of potassium ion transport"/>
    <property type="evidence" value="ECO:0007669"/>
    <property type="project" value="Ensembl"/>
</dbReference>
<dbReference type="GO" id="GO:0072659">
    <property type="term" value="P:protein localization to plasma membrane"/>
    <property type="evidence" value="ECO:0007669"/>
    <property type="project" value="Ensembl"/>
</dbReference>
<dbReference type="GO" id="GO:0042391">
    <property type="term" value="P:regulation of membrane potential"/>
    <property type="evidence" value="ECO:0007669"/>
    <property type="project" value="Ensembl"/>
</dbReference>
<dbReference type="GO" id="GO:0045214">
    <property type="term" value="P:sarcomere organization"/>
    <property type="evidence" value="ECO:0007669"/>
    <property type="project" value="Ensembl"/>
</dbReference>
<dbReference type="CDD" id="cd21214">
    <property type="entry name" value="CH_ACTN_rpt1"/>
    <property type="match status" value="1"/>
</dbReference>
<dbReference type="CDD" id="cd21216">
    <property type="entry name" value="CH_ACTN_rpt2"/>
    <property type="match status" value="1"/>
</dbReference>
<dbReference type="CDD" id="cd00051">
    <property type="entry name" value="EFh"/>
    <property type="match status" value="1"/>
</dbReference>
<dbReference type="CDD" id="cd00176">
    <property type="entry name" value="SPEC"/>
    <property type="match status" value="1"/>
</dbReference>
<dbReference type="FunFam" id="1.10.238.10:FF:000004">
    <property type="entry name" value="Actinin alpha 1"/>
    <property type="match status" value="1"/>
</dbReference>
<dbReference type="FunFam" id="1.10.418.10:FF:000001">
    <property type="entry name" value="Actinin alpha 1"/>
    <property type="match status" value="1"/>
</dbReference>
<dbReference type="FunFam" id="1.20.58.60:FF:000004">
    <property type="entry name" value="Actinin alpha 1"/>
    <property type="match status" value="1"/>
</dbReference>
<dbReference type="FunFam" id="1.20.58.60:FF:000005">
    <property type="entry name" value="Actinin alpha 1"/>
    <property type="match status" value="1"/>
</dbReference>
<dbReference type="FunFam" id="1.10.418.10:FF:000005">
    <property type="entry name" value="Actinin alpha 4"/>
    <property type="match status" value="1"/>
</dbReference>
<dbReference type="FunFam" id="1.10.238.10:FF:000018">
    <property type="entry name" value="Actinin, alpha 1"/>
    <property type="match status" value="1"/>
</dbReference>
<dbReference type="FunFam" id="1.20.58.60:FF:000002">
    <property type="entry name" value="Actinin, alpha 1"/>
    <property type="match status" value="1"/>
</dbReference>
<dbReference type="FunFam" id="1.20.58.60:FF:000003">
    <property type="entry name" value="Actinin, alpha 1"/>
    <property type="match status" value="1"/>
</dbReference>
<dbReference type="Gene3D" id="1.20.58.60">
    <property type="match status" value="4"/>
</dbReference>
<dbReference type="Gene3D" id="1.10.418.10">
    <property type="entry name" value="Calponin-like domain"/>
    <property type="match status" value="2"/>
</dbReference>
<dbReference type="Gene3D" id="1.10.238.10">
    <property type="entry name" value="EF-hand"/>
    <property type="match status" value="2"/>
</dbReference>
<dbReference type="InterPro" id="IPR001589">
    <property type="entry name" value="Actinin_actin-bd_CS"/>
</dbReference>
<dbReference type="InterPro" id="IPR001715">
    <property type="entry name" value="CH_dom"/>
</dbReference>
<dbReference type="InterPro" id="IPR036872">
    <property type="entry name" value="CH_dom_sf"/>
</dbReference>
<dbReference type="InterPro" id="IPR011992">
    <property type="entry name" value="EF-hand-dom_pair"/>
</dbReference>
<dbReference type="InterPro" id="IPR014837">
    <property type="entry name" value="EF-hand_Ca_insen"/>
</dbReference>
<dbReference type="InterPro" id="IPR002048">
    <property type="entry name" value="EF_hand_dom"/>
</dbReference>
<dbReference type="InterPro" id="IPR018159">
    <property type="entry name" value="Spectrin/alpha-actinin"/>
</dbReference>
<dbReference type="InterPro" id="IPR002017">
    <property type="entry name" value="Spectrin_repeat"/>
</dbReference>
<dbReference type="PANTHER" id="PTHR11915">
    <property type="entry name" value="SPECTRIN/FILAMIN RELATED CYTOSKELETAL PROTEIN"/>
    <property type="match status" value="1"/>
</dbReference>
<dbReference type="Pfam" id="PF00307">
    <property type="entry name" value="CH"/>
    <property type="match status" value="2"/>
</dbReference>
<dbReference type="Pfam" id="PF13499">
    <property type="entry name" value="EF-hand_7"/>
    <property type="match status" value="1"/>
</dbReference>
<dbReference type="Pfam" id="PF08726">
    <property type="entry name" value="EFhand_Ca_insen"/>
    <property type="match status" value="1"/>
</dbReference>
<dbReference type="Pfam" id="PF00435">
    <property type="entry name" value="Spectrin"/>
    <property type="match status" value="4"/>
</dbReference>
<dbReference type="SMART" id="SM00033">
    <property type="entry name" value="CH"/>
    <property type="match status" value="2"/>
</dbReference>
<dbReference type="SMART" id="SM00054">
    <property type="entry name" value="EFh"/>
    <property type="match status" value="2"/>
</dbReference>
<dbReference type="SMART" id="SM01184">
    <property type="entry name" value="efhand_Ca_insen"/>
    <property type="match status" value="1"/>
</dbReference>
<dbReference type="SMART" id="SM00150">
    <property type="entry name" value="SPEC"/>
    <property type="match status" value="3"/>
</dbReference>
<dbReference type="SUPFAM" id="SSF47576">
    <property type="entry name" value="Calponin-homology domain, CH-domain"/>
    <property type="match status" value="1"/>
</dbReference>
<dbReference type="SUPFAM" id="SSF47473">
    <property type="entry name" value="EF-hand"/>
    <property type="match status" value="1"/>
</dbReference>
<dbReference type="SUPFAM" id="SSF46966">
    <property type="entry name" value="Spectrin repeat"/>
    <property type="match status" value="4"/>
</dbReference>
<dbReference type="PROSITE" id="PS00019">
    <property type="entry name" value="ACTININ_1"/>
    <property type="match status" value="1"/>
</dbReference>
<dbReference type="PROSITE" id="PS00020">
    <property type="entry name" value="ACTININ_2"/>
    <property type="match status" value="1"/>
</dbReference>
<dbReference type="PROSITE" id="PS50021">
    <property type="entry name" value="CH"/>
    <property type="match status" value="2"/>
</dbReference>
<dbReference type="PROSITE" id="PS50222">
    <property type="entry name" value="EF_HAND_2"/>
    <property type="match status" value="2"/>
</dbReference>
<proteinExistence type="evidence at transcript level"/>
<keyword id="KW-0009">Actin-binding</keyword>
<keyword id="KW-0106">Calcium</keyword>
<keyword id="KW-0963">Cytoplasm</keyword>
<keyword id="KW-0479">Metal-binding</keyword>
<keyword id="KW-0597">Phosphoprotein</keyword>
<keyword id="KW-1185">Reference proteome</keyword>
<keyword id="KW-0677">Repeat</keyword>
<keyword id="KW-0832">Ubl conjugation</keyword>
<sequence>MNQIEPGVQYNYVYEDDEYMIQEEEWDRDLLLDPAWEKQQRKTFTAWCNSHLRKAGTQIENIEEDFRNGLKLMLLLEVISGERLPKPDRGKMRFHKIANVNKALDYIASKGVKLVSIGAEEIVDGNVKMTLGMIWTIILRFAIQDISVEETSAKEGLLLWCQRKTAPYRNVNIQNFHTSWKDGLGLCALIHRHRPDLIDYSKLNKDDPIGNINLAMEIAEKHLDIPKMLDAEDIVNTPKPDERAIMTYVSCFYHAFAGAEQAETAANRICKVLAVNQENERLMEEYERLASELLEWIRRTIPWLENRTPEKTMQAMQKKLEDFRDYRRKHKPPKVQEKCQLEINFNTLQTKLRISNRPAFMPSEGKMVSDIAGAWQRLEQAEKGYEEWLLNEIRRLERVEHLAEKFRQKASTHETWAYGKEQILLQKDYESSTLTEVRALLRKHEAFESDLAAHQDRVEQIAAIAQELNELDYHDAVNVNDRCQKICDQWDRLGTLTQKRREALERTEKLLETIDQLHLEFAKRAAPFNNWMEGAMEDLQDMFIVHSIEEIQSLITAHEQFKATLPEADGERQSILAIQNEVEKVIQSYSIRISSSNPYSTVTVDEIRSKWDKVKQLVPIRDQSLQEELARQHANERLRRQFAAQANAIGPWIQNKMEEIARSSIQITGALEDQMNQLKQYEHNIINYKNNIDKLEGDHQLIQEALVFDNKHTNYTMEHIRVGWELLLTTIARTINEVETQILTRDAKGITQEQMNEFRASFNHFDRRKNGLMDHEDFRACLISMGYDLGEAEFARIMTLVDPNGQGTVTFQSFIDFMTRETADTDTAEQVIASFRILASDKPYILAEELRRELPPDQAQYCIKRMPAYSGPGSVPGALDYTAFSSALYGESDL</sequence>
<name>ACTN2_BOVIN</name>
<comment type="function">
    <text evidence="1">F-actin cross-linking protein which is thought to anchor actin to a variety of intracellular structures. This is a bundling protein (By similarity).</text>
</comment>
<comment type="subunit">
    <text evidence="1 2">Homodimer; antiparallel. Also forms heterodimers with ACTN3. Interacts with ADAM12, MYOZ1, MYOZ2 and MYOZ3. Interacts via its C-terminal region with the LDB3 PDZ domain. Interacts with XIRP2. Interacts with DST (via N-terminus). Interacts with PARVB. Interacts with SYNPO2 (By similarity).</text>
</comment>
<comment type="subcellular location">
    <subcellularLocation>
        <location evidence="1">Cytoplasm</location>
        <location evidence="1">Myofibril</location>
        <location evidence="1">Sarcomere</location>
        <location evidence="1">Z line</location>
    </subcellularLocation>
    <text evidence="1">Colocalizes with MYOZ1 and FLNC at the Z-lines of skeletal muscle.</text>
</comment>
<comment type="PTM">
    <text evidence="1">Ubiquitinated by FBXL22, leading to proteasomal degradation.</text>
</comment>
<comment type="similarity">
    <text evidence="6">Belongs to the alpha-actinin family.</text>
</comment>
<evidence type="ECO:0000250" key="1"/>
<evidence type="ECO:0000250" key="2">
    <source>
        <dbReference type="UniProtKB" id="P35609"/>
    </source>
</evidence>
<evidence type="ECO:0000250" key="3">
    <source>
        <dbReference type="UniProtKB" id="Q9JI91"/>
    </source>
</evidence>
<evidence type="ECO:0000255" key="4">
    <source>
        <dbReference type="PROSITE-ProRule" id="PRU00044"/>
    </source>
</evidence>
<evidence type="ECO:0000255" key="5">
    <source>
        <dbReference type="PROSITE-ProRule" id="PRU00448"/>
    </source>
</evidence>
<evidence type="ECO:0000305" key="6"/>
<organism>
    <name type="scientific">Bos taurus</name>
    <name type="common">Bovine</name>
    <dbReference type="NCBI Taxonomy" id="9913"/>
    <lineage>
        <taxon>Eukaryota</taxon>
        <taxon>Metazoa</taxon>
        <taxon>Chordata</taxon>
        <taxon>Craniata</taxon>
        <taxon>Vertebrata</taxon>
        <taxon>Euteleostomi</taxon>
        <taxon>Mammalia</taxon>
        <taxon>Eutheria</taxon>
        <taxon>Laurasiatheria</taxon>
        <taxon>Artiodactyla</taxon>
        <taxon>Ruminantia</taxon>
        <taxon>Pecora</taxon>
        <taxon>Bovidae</taxon>
        <taxon>Bovinae</taxon>
        <taxon>Bos</taxon>
    </lineage>
</organism>